<organism>
    <name type="scientific">Mycolicibacterium vanbaalenii (strain DSM 7251 / JCM 13017 / BCRC 16820 / KCTC 9966 / NRRL B-24157 / PYR-1)</name>
    <name type="common">Mycobacterium vanbaalenii</name>
    <dbReference type="NCBI Taxonomy" id="350058"/>
    <lineage>
        <taxon>Bacteria</taxon>
        <taxon>Bacillati</taxon>
        <taxon>Actinomycetota</taxon>
        <taxon>Actinomycetes</taxon>
        <taxon>Mycobacteriales</taxon>
        <taxon>Mycobacteriaceae</taxon>
        <taxon>Mycolicibacterium</taxon>
    </lineage>
</organism>
<keyword id="KW-0963">Cytoplasm</keyword>
<keyword id="KW-0378">Hydrolase</keyword>
<keyword id="KW-0479">Metal-binding</keyword>
<keyword id="KW-0533">Nickel</keyword>
<proteinExistence type="inferred from homology"/>
<gene>
    <name evidence="1" type="primary">ureC</name>
    <name type="ordered locus">Mvan_3082</name>
</gene>
<dbReference type="EC" id="3.5.1.5" evidence="1"/>
<dbReference type="EMBL" id="CP000511">
    <property type="protein sequence ID" value="ABM13884.1"/>
    <property type="molecule type" value="Genomic_DNA"/>
</dbReference>
<dbReference type="RefSeq" id="WP_011780289.1">
    <property type="nucleotide sequence ID" value="NC_008726.1"/>
</dbReference>
<dbReference type="SMR" id="A1T9N4"/>
<dbReference type="STRING" id="350058.Mvan_3082"/>
<dbReference type="KEGG" id="mva:Mvan_3082"/>
<dbReference type="eggNOG" id="COG0804">
    <property type="taxonomic scope" value="Bacteria"/>
</dbReference>
<dbReference type="HOGENOM" id="CLU_000980_0_0_11"/>
<dbReference type="UniPathway" id="UPA00258">
    <property type="reaction ID" value="UER00370"/>
</dbReference>
<dbReference type="Proteomes" id="UP000009159">
    <property type="component" value="Chromosome"/>
</dbReference>
<dbReference type="GO" id="GO:0005737">
    <property type="term" value="C:cytoplasm"/>
    <property type="evidence" value="ECO:0007669"/>
    <property type="project" value="UniProtKB-SubCell"/>
</dbReference>
<dbReference type="GO" id="GO:0016151">
    <property type="term" value="F:nickel cation binding"/>
    <property type="evidence" value="ECO:0007669"/>
    <property type="project" value="UniProtKB-UniRule"/>
</dbReference>
<dbReference type="GO" id="GO:0009039">
    <property type="term" value="F:urease activity"/>
    <property type="evidence" value="ECO:0007669"/>
    <property type="project" value="UniProtKB-UniRule"/>
</dbReference>
<dbReference type="GO" id="GO:0043419">
    <property type="term" value="P:urea catabolic process"/>
    <property type="evidence" value="ECO:0007669"/>
    <property type="project" value="UniProtKB-UniRule"/>
</dbReference>
<dbReference type="CDD" id="cd00375">
    <property type="entry name" value="Urease_alpha"/>
    <property type="match status" value="1"/>
</dbReference>
<dbReference type="Gene3D" id="3.20.20.140">
    <property type="entry name" value="Metal-dependent hydrolases"/>
    <property type="match status" value="1"/>
</dbReference>
<dbReference type="Gene3D" id="2.30.40.10">
    <property type="entry name" value="Urease, subunit C, domain 1"/>
    <property type="match status" value="1"/>
</dbReference>
<dbReference type="HAMAP" id="MF_01953">
    <property type="entry name" value="Urease_alpha"/>
    <property type="match status" value="1"/>
</dbReference>
<dbReference type="InterPro" id="IPR006680">
    <property type="entry name" value="Amidohydro-rel"/>
</dbReference>
<dbReference type="InterPro" id="IPR011059">
    <property type="entry name" value="Metal-dep_hydrolase_composite"/>
</dbReference>
<dbReference type="InterPro" id="IPR032466">
    <property type="entry name" value="Metal_Hydrolase"/>
</dbReference>
<dbReference type="InterPro" id="IPR011612">
    <property type="entry name" value="Urease_alpha_N_dom"/>
</dbReference>
<dbReference type="InterPro" id="IPR050112">
    <property type="entry name" value="Urease_alpha_subunit"/>
</dbReference>
<dbReference type="InterPro" id="IPR017950">
    <property type="entry name" value="Urease_AS"/>
</dbReference>
<dbReference type="InterPro" id="IPR005848">
    <property type="entry name" value="Urease_asu"/>
</dbReference>
<dbReference type="InterPro" id="IPR017951">
    <property type="entry name" value="Urease_asu_c"/>
</dbReference>
<dbReference type="InterPro" id="IPR029754">
    <property type="entry name" value="Urease_Ni-bd"/>
</dbReference>
<dbReference type="NCBIfam" id="NF009685">
    <property type="entry name" value="PRK13206.1"/>
    <property type="match status" value="1"/>
</dbReference>
<dbReference type="NCBIfam" id="NF009686">
    <property type="entry name" value="PRK13207.1"/>
    <property type="match status" value="1"/>
</dbReference>
<dbReference type="NCBIfam" id="TIGR01792">
    <property type="entry name" value="urease_alph"/>
    <property type="match status" value="1"/>
</dbReference>
<dbReference type="PANTHER" id="PTHR43440">
    <property type="entry name" value="UREASE"/>
    <property type="match status" value="1"/>
</dbReference>
<dbReference type="PANTHER" id="PTHR43440:SF1">
    <property type="entry name" value="UREASE"/>
    <property type="match status" value="1"/>
</dbReference>
<dbReference type="Pfam" id="PF01979">
    <property type="entry name" value="Amidohydro_1"/>
    <property type="match status" value="1"/>
</dbReference>
<dbReference type="Pfam" id="PF00449">
    <property type="entry name" value="Urease_alpha"/>
    <property type="match status" value="1"/>
</dbReference>
<dbReference type="PRINTS" id="PR01752">
    <property type="entry name" value="UREASE"/>
</dbReference>
<dbReference type="SUPFAM" id="SSF51338">
    <property type="entry name" value="Composite domain of metallo-dependent hydrolases"/>
    <property type="match status" value="2"/>
</dbReference>
<dbReference type="SUPFAM" id="SSF51556">
    <property type="entry name" value="Metallo-dependent hydrolases"/>
    <property type="match status" value="1"/>
</dbReference>
<dbReference type="PROSITE" id="PS01120">
    <property type="entry name" value="UREASE_1"/>
    <property type="match status" value="1"/>
</dbReference>
<dbReference type="PROSITE" id="PS00145">
    <property type="entry name" value="UREASE_2"/>
    <property type="match status" value="1"/>
</dbReference>
<dbReference type="PROSITE" id="PS51368">
    <property type="entry name" value="UREASE_3"/>
    <property type="match status" value="1"/>
</dbReference>
<feature type="chain" id="PRO_1000070675" description="Urease subunit alpha">
    <location>
        <begin position="1"/>
        <end position="573"/>
    </location>
</feature>
<feature type="domain" description="Urease" evidence="1">
    <location>
        <begin position="136"/>
        <end position="573"/>
    </location>
</feature>
<feature type="active site" description="Proton donor" evidence="1">
    <location>
        <position position="327"/>
    </location>
</feature>
<feature type="binding site" evidence="1">
    <location>
        <position position="141"/>
    </location>
    <ligand>
        <name>Ni(2+)</name>
        <dbReference type="ChEBI" id="CHEBI:49786"/>
        <label>1</label>
    </ligand>
</feature>
<feature type="binding site" evidence="1">
    <location>
        <position position="143"/>
    </location>
    <ligand>
        <name>Ni(2+)</name>
        <dbReference type="ChEBI" id="CHEBI:49786"/>
        <label>1</label>
    </ligand>
</feature>
<feature type="binding site" description="via carbamate group" evidence="1">
    <location>
        <position position="224"/>
    </location>
    <ligand>
        <name>Ni(2+)</name>
        <dbReference type="ChEBI" id="CHEBI:49786"/>
        <label>1</label>
    </ligand>
</feature>
<feature type="binding site" description="via carbamate group" evidence="1">
    <location>
        <position position="224"/>
    </location>
    <ligand>
        <name>Ni(2+)</name>
        <dbReference type="ChEBI" id="CHEBI:49786"/>
        <label>2</label>
    </ligand>
</feature>
<feature type="binding site" evidence="1">
    <location>
        <position position="226"/>
    </location>
    <ligand>
        <name>substrate</name>
    </ligand>
</feature>
<feature type="binding site" evidence="1">
    <location>
        <position position="253"/>
    </location>
    <ligand>
        <name>Ni(2+)</name>
        <dbReference type="ChEBI" id="CHEBI:49786"/>
        <label>2</label>
    </ligand>
</feature>
<feature type="binding site" evidence="1">
    <location>
        <position position="279"/>
    </location>
    <ligand>
        <name>Ni(2+)</name>
        <dbReference type="ChEBI" id="CHEBI:49786"/>
        <label>2</label>
    </ligand>
</feature>
<feature type="binding site" evidence="1">
    <location>
        <position position="367"/>
    </location>
    <ligand>
        <name>Ni(2+)</name>
        <dbReference type="ChEBI" id="CHEBI:49786"/>
        <label>1</label>
    </ligand>
</feature>
<feature type="modified residue" description="N6-carboxylysine" evidence="1">
    <location>
        <position position="224"/>
    </location>
</feature>
<sequence>MTQLSRERYAALYGPTTGDRIRLADTDLLIEITEDRSGGPGLAGDEAVFGGGKVLRESMGQSRVTRADGAPDTVITGAVILDYWGIIKADIGIRDGRITAIGKAGNPDIMTGVHPGLVVGPSTEIIAGNGRIVTAGAIDCHVHLICPQIMAEALGGGITTIVAGGTGPAEGSKATTVTPGAWHLARMLEALDTWPLNIALLGKGNTVSAEAMWEQLRGGAAGFKLHEDWGTTPAAIDACLTVCDAAGVQANIHTDTLNEAGFVEHTLAAIKGRSIHAYHTEGAGGGHAPDIITVAGHPNVLPSSTNPTRPHTVNTLDEHLDMLMVCHHLNPSVPEDLAFAESRIRPSTIAAEDLLHDIGAISMIGSDAQAMGRIGEVVMRTWQTAHVMKRRRGFLPGDTKADNARAKRYVAKYTICPAVAHGLDGEIGSVEVGKLADLVLWEPAFFGVRPHAVVKGGMIAWAAMGDANASIPTPQPVLPRPMFGAAPAAAAATSVHFVAPQAIEDGLADRIAVNRKLVAVGNVRGVGKAQMPLNDATPDIEVDPDTFTVRIDGEVWQEQPATELPMAQRYFLF</sequence>
<name>URE1_MYCVP</name>
<protein>
    <recommendedName>
        <fullName evidence="1">Urease subunit alpha</fullName>
        <ecNumber evidence="1">3.5.1.5</ecNumber>
    </recommendedName>
    <alternativeName>
        <fullName evidence="1">Urea amidohydrolase subunit alpha</fullName>
    </alternativeName>
</protein>
<reference key="1">
    <citation type="submission" date="2006-12" db="EMBL/GenBank/DDBJ databases">
        <title>Complete sequence of Mycobacterium vanbaalenii PYR-1.</title>
        <authorList>
            <consortium name="US DOE Joint Genome Institute"/>
            <person name="Copeland A."/>
            <person name="Lucas S."/>
            <person name="Lapidus A."/>
            <person name="Barry K."/>
            <person name="Detter J.C."/>
            <person name="Glavina del Rio T."/>
            <person name="Hammon N."/>
            <person name="Israni S."/>
            <person name="Dalin E."/>
            <person name="Tice H."/>
            <person name="Pitluck S."/>
            <person name="Singan V."/>
            <person name="Schmutz J."/>
            <person name="Larimer F."/>
            <person name="Land M."/>
            <person name="Hauser L."/>
            <person name="Kyrpides N."/>
            <person name="Anderson I.J."/>
            <person name="Miller C."/>
            <person name="Richardson P."/>
        </authorList>
    </citation>
    <scope>NUCLEOTIDE SEQUENCE [LARGE SCALE GENOMIC DNA]</scope>
    <source>
        <strain>DSM 7251 / JCM 13017 / BCRC 16820 / KCTC 9966 / NRRL B-24157 / PYR-1</strain>
    </source>
</reference>
<accession>A1T9N4</accession>
<comment type="catalytic activity">
    <reaction evidence="1">
        <text>urea + 2 H2O + H(+) = hydrogencarbonate + 2 NH4(+)</text>
        <dbReference type="Rhea" id="RHEA:20557"/>
        <dbReference type="ChEBI" id="CHEBI:15377"/>
        <dbReference type="ChEBI" id="CHEBI:15378"/>
        <dbReference type="ChEBI" id="CHEBI:16199"/>
        <dbReference type="ChEBI" id="CHEBI:17544"/>
        <dbReference type="ChEBI" id="CHEBI:28938"/>
        <dbReference type="EC" id="3.5.1.5"/>
    </reaction>
</comment>
<comment type="cofactor">
    <cofactor evidence="1">
        <name>Ni cation</name>
        <dbReference type="ChEBI" id="CHEBI:25516"/>
    </cofactor>
    <text evidence="1">Binds 2 nickel ions per subunit.</text>
</comment>
<comment type="pathway">
    <text evidence="1">Nitrogen metabolism; urea degradation; CO(2) and NH(3) from urea (urease route): step 1/1.</text>
</comment>
<comment type="subunit">
    <text evidence="1">Heterotrimer of UreA (gamma), UreB (beta) and UreC (alpha) subunits. Three heterotrimers associate to form the active enzyme.</text>
</comment>
<comment type="subcellular location">
    <subcellularLocation>
        <location evidence="1">Cytoplasm</location>
    </subcellularLocation>
</comment>
<comment type="PTM">
    <text evidence="1">Carboxylation allows a single lysine to coordinate two nickel ions.</text>
</comment>
<comment type="similarity">
    <text evidence="1">Belongs to the metallo-dependent hydrolases superfamily. Urease alpha subunit family.</text>
</comment>
<evidence type="ECO:0000255" key="1">
    <source>
        <dbReference type="HAMAP-Rule" id="MF_01953"/>
    </source>
</evidence>